<evidence type="ECO:0000255" key="1">
    <source>
        <dbReference type="HAMAP-Rule" id="MF_02017"/>
    </source>
</evidence>
<evidence type="ECO:0000256" key="2">
    <source>
        <dbReference type="SAM" id="MobiDB-lite"/>
    </source>
</evidence>
<name>RODZ_SHISS</name>
<protein>
    <recommendedName>
        <fullName evidence="1">Cytoskeleton protein RodZ</fullName>
    </recommendedName>
</protein>
<organism>
    <name type="scientific">Shigella sonnei (strain Ss046)</name>
    <dbReference type="NCBI Taxonomy" id="300269"/>
    <lineage>
        <taxon>Bacteria</taxon>
        <taxon>Pseudomonadati</taxon>
        <taxon>Pseudomonadota</taxon>
        <taxon>Gammaproteobacteria</taxon>
        <taxon>Enterobacterales</taxon>
        <taxon>Enterobacteriaceae</taxon>
        <taxon>Shigella</taxon>
    </lineage>
</organism>
<gene>
    <name evidence="1" type="primary">rodZ</name>
    <name type="ordered locus">SSON_2598</name>
</gene>
<proteinExistence type="inferred from homology"/>
<comment type="function">
    <text evidence="1">Cytoskeletal protein that is involved in cell-shape control through regulation of the length of the long axis.</text>
</comment>
<comment type="subcellular location">
    <subcellularLocation>
        <location evidence="1">Cell inner membrane</location>
        <topology evidence="1">Single-pass type II membrane protein</topology>
    </subcellularLocation>
    <text evidence="1">Forms helical filaments along the long axis of the cell.</text>
</comment>
<comment type="domain">
    <text evidence="1">The helix-turn-helix (HTH) motif in the cytoplasmic domain of the N-terminus is involved in the formation of spirals to maintain the rigid rod shape. As this protein is anchored in the cytoplasmic membrane, the HTH motif may contribute to protein-protein interactions to form the RodZ helix, which is localized beneath the cytoplasmic membrane. The C-terminal domain may be critical for determination of the rod shape by probably interacting with enzymes required for synthesis of the peptidoglycan layer, including PBPs in the periplasm.</text>
</comment>
<comment type="similarity">
    <text evidence="1">Belongs to the RodZ family.</text>
</comment>
<dbReference type="EMBL" id="CP000038">
    <property type="protein sequence ID" value="AAZ89226.1"/>
    <property type="molecule type" value="Genomic_DNA"/>
</dbReference>
<dbReference type="RefSeq" id="WP_001090857.1">
    <property type="nucleotide sequence ID" value="NC_007384.1"/>
</dbReference>
<dbReference type="SMR" id="Q3YZ36"/>
<dbReference type="GeneID" id="93774620"/>
<dbReference type="KEGG" id="ssn:SSON_2598"/>
<dbReference type="HOGENOM" id="CLU_047530_3_1_6"/>
<dbReference type="Proteomes" id="UP000002529">
    <property type="component" value="Chromosome"/>
</dbReference>
<dbReference type="GO" id="GO:0005886">
    <property type="term" value="C:plasma membrane"/>
    <property type="evidence" value="ECO:0007669"/>
    <property type="project" value="UniProtKB-SubCell"/>
</dbReference>
<dbReference type="GO" id="GO:0003677">
    <property type="term" value="F:DNA binding"/>
    <property type="evidence" value="ECO:0007669"/>
    <property type="project" value="UniProtKB-KW"/>
</dbReference>
<dbReference type="GO" id="GO:0008360">
    <property type="term" value="P:regulation of cell shape"/>
    <property type="evidence" value="ECO:0007669"/>
    <property type="project" value="UniProtKB-UniRule"/>
</dbReference>
<dbReference type="CDD" id="cd00093">
    <property type="entry name" value="HTH_XRE"/>
    <property type="match status" value="1"/>
</dbReference>
<dbReference type="FunFam" id="1.10.260.40:FF:000014">
    <property type="entry name" value="Cytoskeleton protein RodZ"/>
    <property type="match status" value="1"/>
</dbReference>
<dbReference type="Gene3D" id="1.10.260.40">
    <property type="entry name" value="lambda repressor-like DNA-binding domains"/>
    <property type="match status" value="1"/>
</dbReference>
<dbReference type="HAMAP" id="MF_02017">
    <property type="entry name" value="RodZ"/>
    <property type="match status" value="1"/>
</dbReference>
<dbReference type="InterPro" id="IPR050400">
    <property type="entry name" value="Bact_Cytoskel_RodZ"/>
</dbReference>
<dbReference type="InterPro" id="IPR001387">
    <property type="entry name" value="Cro/C1-type_HTH"/>
</dbReference>
<dbReference type="InterPro" id="IPR010982">
    <property type="entry name" value="Lambda_DNA-bd_dom_sf"/>
</dbReference>
<dbReference type="InterPro" id="IPR023690">
    <property type="entry name" value="RodZ"/>
</dbReference>
<dbReference type="InterPro" id="IPR025194">
    <property type="entry name" value="RodZ-like_C"/>
</dbReference>
<dbReference type="NCBIfam" id="NF008109">
    <property type="entry name" value="PRK10856.1"/>
    <property type="match status" value="1"/>
</dbReference>
<dbReference type="PANTHER" id="PTHR34475">
    <property type="match status" value="1"/>
</dbReference>
<dbReference type="PANTHER" id="PTHR34475:SF1">
    <property type="entry name" value="CYTOSKELETON PROTEIN RODZ"/>
    <property type="match status" value="1"/>
</dbReference>
<dbReference type="Pfam" id="PF13413">
    <property type="entry name" value="HTH_25"/>
    <property type="match status" value="1"/>
</dbReference>
<dbReference type="Pfam" id="PF13464">
    <property type="entry name" value="RodZ_C"/>
    <property type="match status" value="1"/>
</dbReference>
<dbReference type="SMART" id="SM00530">
    <property type="entry name" value="HTH_XRE"/>
    <property type="match status" value="1"/>
</dbReference>
<dbReference type="SUPFAM" id="SSF47413">
    <property type="entry name" value="lambda repressor-like DNA-binding domains"/>
    <property type="match status" value="1"/>
</dbReference>
<dbReference type="PROSITE" id="PS50943">
    <property type="entry name" value="HTH_CROC1"/>
    <property type="match status" value="1"/>
</dbReference>
<sequence length="337" mass="36173">MNTEATHDQNEALTTGARLRNAREQLGLSQQAVAERLCLKVSTVRDIEEDKAPADLASTFLRGYIRSYARLVHIPEEELLPGLEKQAPLRAAKVAPMQSFSLGKRRKKRDGWLMTFTWLVLFVVIGLSGAWWWQDHKAQQEEITTMADQSSAELSSNSEQGQSVPLNTSTTTDPATTSTPPASVDTTATNTQTPAVTAPAPAVDPQQNAVVSPSQANVDTAATPVPTAATTPDGAAPLPTDQAGVTTPAADPNALVMNFTADCWLEVTDATGKKLFSGMQRKDGNLNLTGQAPYKLKIGAPAAVQIQYQGKPVDLSRFIRTNQVARLTLNAEQSPAQ</sequence>
<keyword id="KW-0997">Cell inner membrane</keyword>
<keyword id="KW-1003">Cell membrane</keyword>
<keyword id="KW-0133">Cell shape</keyword>
<keyword id="KW-0238">DNA-binding</keyword>
<keyword id="KW-0472">Membrane</keyword>
<keyword id="KW-1185">Reference proteome</keyword>
<keyword id="KW-0735">Signal-anchor</keyword>
<keyword id="KW-0812">Transmembrane</keyword>
<keyword id="KW-1133">Transmembrane helix</keyword>
<feature type="chain" id="PRO_0000361867" description="Cytoskeleton protein RodZ">
    <location>
        <begin position="1"/>
        <end position="337"/>
    </location>
</feature>
<feature type="topological domain" description="Cytoplasmic" evidence="1">
    <location>
        <begin position="1"/>
        <end position="111"/>
    </location>
</feature>
<feature type="transmembrane region" description="Helical; Signal-anchor for type II membrane protein" evidence="1">
    <location>
        <begin position="112"/>
        <end position="132"/>
    </location>
</feature>
<feature type="topological domain" description="Periplasmic" evidence="1">
    <location>
        <begin position="133"/>
        <end position="337"/>
    </location>
</feature>
<feature type="domain" description="HTH cro/C1-type" evidence="1">
    <location>
        <begin position="19"/>
        <end position="71"/>
    </location>
</feature>
<feature type="DNA-binding region" description="H-T-H motif" evidence="1">
    <location>
        <begin position="30"/>
        <end position="49"/>
    </location>
</feature>
<feature type="region of interest" description="Disordered" evidence="2">
    <location>
        <begin position="145"/>
        <end position="218"/>
    </location>
</feature>
<feature type="compositionally biased region" description="Polar residues" evidence="2">
    <location>
        <begin position="145"/>
        <end position="167"/>
    </location>
</feature>
<feature type="compositionally biased region" description="Low complexity" evidence="2">
    <location>
        <begin position="168"/>
        <end position="207"/>
    </location>
</feature>
<feature type="compositionally biased region" description="Polar residues" evidence="2">
    <location>
        <begin position="208"/>
        <end position="218"/>
    </location>
</feature>
<reference key="1">
    <citation type="journal article" date="2005" name="Nucleic Acids Res.">
        <title>Genome dynamics and diversity of Shigella species, the etiologic agents of bacillary dysentery.</title>
        <authorList>
            <person name="Yang F."/>
            <person name="Yang J."/>
            <person name="Zhang X."/>
            <person name="Chen L."/>
            <person name="Jiang Y."/>
            <person name="Yan Y."/>
            <person name="Tang X."/>
            <person name="Wang J."/>
            <person name="Xiong Z."/>
            <person name="Dong J."/>
            <person name="Xue Y."/>
            <person name="Zhu Y."/>
            <person name="Xu X."/>
            <person name="Sun L."/>
            <person name="Chen S."/>
            <person name="Nie H."/>
            <person name="Peng J."/>
            <person name="Xu J."/>
            <person name="Wang Y."/>
            <person name="Yuan Z."/>
            <person name="Wen Y."/>
            <person name="Yao Z."/>
            <person name="Shen Y."/>
            <person name="Qiang B."/>
            <person name="Hou Y."/>
            <person name="Yu J."/>
            <person name="Jin Q."/>
        </authorList>
    </citation>
    <scope>NUCLEOTIDE SEQUENCE [LARGE SCALE GENOMIC DNA]</scope>
    <source>
        <strain>Ss046</strain>
    </source>
</reference>
<accession>Q3YZ36</accession>